<protein>
    <recommendedName>
        <fullName evidence="8">Epithelial sodium channel subunit alpha</fullName>
        <shortName>Alpha-ENaC</shortName>
        <shortName>Epithelial Na(+) channel subunit alpha</shortName>
    </recommendedName>
    <alternativeName>
        <fullName>Alpha-NaCH</fullName>
    </alternativeName>
    <alternativeName>
        <fullName evidence="8">Amiloride-sensitive sodium channel subunit alpha</fullName>
    </alternativeName>
    <alternativeName>
        <fullName>Nonvoltage-gated sodium channel 1 subunit alpha</fullName>
    </alternativeName>
    <alternativeName>
        <fullName>SCNEA</fullName>
    </alternativeName>
</protein>
<keyword id="KW-1003">Cell membrane</keyword>
<keyword id="KW-0966">Cell projection</keyword>
<keyword id="KW-0969">Cilium</keyword>
<keyword id="KW-0963">Cytoplasm</keyword>
<keyword id="KW-0968">Cytoplasmic vesicle</keyword>
<keyword id="KW-1015">Disulfide bond</keyword>
<keyword id="KW-0282">Flagellum</keyword>
<keyword id="KW-0407">Ion channel</keyword>
<keyword id="KW-0406">Ion transport</keyword>
<keyword id="KW-0472">Membrane</keyword>
<keyword id="KW-1185">Reference proteome</keyword>
<keyword id="KW-0915">Sodium</keyword>
<keyword id="KW-0894">Sodium channel</keyword>
<keyword id="KW-0739">Sodium transport</keyword>
<keyword id="KW-0812">Transmembrane</keyword>
<keyword id="KW-1133">Transmembrane helix</keyword>
<keyword id="KW-0813">Transport</keyword>
<dbReference type="EMBL" id="U23535">
    <property type="protein sequence ID" value="AAA74970.1"/>
    <property type="molecule type" value="mRNA"/>
</dbReference>
<dbReference type="PIR" id="I51682">
    <property type="entry name" value="I51682"/>
</dbReference>
<dbReference type="SMR" id="P51167"/>
<dbReference type="GeneID" id="397811"/>
<dbReference type="KEGG" id="xla:397811"/>
<dbReference type="AGR" id="Xenbase:XB-GENE-996110"/>
<dbReference type="CTD" id="397811"/>
<dbReference type="Xenbase" id="XB-GENE-996110">
    <property type="gene designation" value="scnn1a.L"/>
</dbReference>
<dbReference type="OrthoDB" id="6238402at2759"/>
<dbReference type="Proteomes" id="UP000186698">
    <property type="component" value="Chromosome 7L"/>
</dbReference>
<dbReference type="Bgee" id="397811">
    <property type="expression patterns" value="Expressed in lung and 12 other cell types or tissues"/>
</dbReference>
<dbReference type="GO" id="GO:0001669">
    <property type="term" value="C:acrosomal vesicle"/>
    <property type="evidence" value="ECO:0007669"/>
    <property type="project" value="UniProtKB-SubCell"/>
</dbReference>
<dbReference type="GO" id="GO:0016324">
    <property type="term" value="C:apical plasma membrane"/>
    <property type="evidence" value="ECO:0000250"/>
    <property type="project" value="UniProtKB"/>
</dbReference>
<dbReference type="GO" id="GO:0060170">
    <property type="term" value="C:ciliary membrane"/>
    <property type="evidence" value="ECO:0000250"/>
    <property type="project" value="UniProtKB"/>
</dbReference>
<dbReference type="GO" id="GO:0005737">
    <property type="term" value="C:cytoplasm"/>
    <property type="evidence" value="ECO:0000250"/>
    <property type="project" value="UniProtKB"/>
</dbReference>
<dbReference type="GO" id="GO:0031514">
    <property type="term" value="C:motile cilium"/>
    <property type="evidence" value="ECO:0000250"/>
    <property type="project" value="UniProtKB"/>
</dbReference>
<dbReference type="GO" id="GO:0005886">
    <property type="term" value="C:plasma membrane"/>
    <property type="evidence" value="ECO:0000250"/>
    <property type="project" value="UniProtKB"/>
</dbReference>
<dbReference type="GO" id="GO:0034706">
    <property type="term" value="C:sodium channel complex"/>
    <property type="evidence" value="ECO:0000250"/>
    <property type="project" value="UniProtKB"/>
</dbReference>
<dbReference type="GO" id="GO:0015280">
    <property type="term" value="F:ligand-gated sodium channel activity"/>
    <property type="evidence" value="ECO:0000318"/>
    <property type="project" value="GO_Central"/>
</dbReference>
<dbReference type="GO" id="GO:0050891">
    <property type="term" value="P:multicellular organismal-level water homeostasis"/>
    <property type="evidence" value="ECO:0000250"/>
    <property type="project" value="UniProtKB"/>
</dbReference>
<dbReference type="GO" id="GO:0055078">
    <property type="term" value="P:sodium ion homeostasis"/>
    <property type="evidence" value="ECO:0000250"/>
    <property type="project" value="UniProtKB"/>
</dbReference>
<dbReference type="GO" id="GO:0035725">
    <property type="term" value="P:sodium ion transmembrane transport"/>
    <property type="evidence" value="ECO:0000250"/>
    <property type="project" value="UniProtKB"/>
</dbReference>
<dbReference type="FunFam" id="2.60.470.10:FF:000002">
    <property type="entry name" value="Amiloride-sensitive sodium channel subunit alpha"/>
    <property type="match status" value="1"/>
</dbReference>
<dbReference type="Gene3D" id="2.60.470.10">
    <property type="entry name" value="Acid-sensing ion channels like domains"/>
    <property type="match status" value="1"/>
</dbReference>
<dbReference type="Gene3D" id="1.10.287.770">
    <property type="entry name" value="YojJ-like"/>
    <property type="match status" value="1"/>
</dbReference>
<dbReference type="InterPro" id="IPR001873">
    <property type="entry name" value="ENaC"/>
</dbReference>
<dbReference type="InterPro" id="IPR004724">
    <property type="entry name" value="ENaC_chordates"/>
</dbReference>
<dbReference type="InterPro" id="IPR020903">
    <property type="entry name" value="ENaC_CS"/>
</dbReference>
<dbReference type="NCBIfam" id="TIGR00859">
    <property type="entry name" value="ENaC"/>
    <property type="match status" value="1"/>
</dbReference>
<dbReference type="PANTHER" id="PTHR11690:SF124">
    <property type="entry name" value="AMILORIDE-SENSITIVE SODIUM CHANNEL SUBUNIT ALPHA"/>
    <property type="match status" value="1"/>
</dbReference>
<dbReference type="PANTHER" id="PTHR11690">
    <property type="entry name" value="AMILORIDE-SENSITIVE SODIUM CHANNEL-RELATED"/>
    <property type="match status" value="1"/>
</dbReference>
<dbReference type="Pfam" id="PF00858">
    <property type="entry name" value="ASC"/>
    <property type="match status" value="1"/>
</dbReference>
<dbReference type="PRINTS" id="PR01078">
    <property type="entry name" value="AMINACHANNEL"/>
</dbReference>
<dbReference type="PROSITE" id="PS01206">
    <property type="entry name" value="ASC"/>
    <property type="match status" value="1"/>
</dbReference>
<evidence type="ECO:0000250" key="1">
    <source>
        <dbReference type="UniProtKB" id="P37088"/>
    </source>
</evidence>
<evidence type="ECO:0000250" key="2">
    <source>
        <dbReference type="UniProtKB" id="P37089"/>
    </source>
</evidence>
<evidence type="ECO:0000255" key="3"/>
<evidence type="ECO:0000256" key="4">
    <source>
        <dbReference type="SAM" id="MobiDB-lite"/>
    </source>
</evidence>
<evidence type="ECO:0000269" key="5">
    <source>
    </source>
</evidence>
<evidence type="ECO:0000269" key="6">
    <source>
    </source>
</evidence>
<evidence type="ECO:0000305" key="7"/>
<evidence type="ECO:0000305" key="8">
    <source>
    </source>
</evidence>
<name>SCNNA_XENLA</name>
<comment type="function">
    <text evidence="1 6">This is one of the three pore-forming subunits of the heterotrimeric epithelial sodium channel (ENaC), a critical regulator of sodium balance and fluid homeostasis (PubMed:7631745). ENaC operates in epithelial tissues, where it mediates the electrodiffusion of sodium ions from extracellular fluid through the apical membrane of cells, with water following osmotically (PubMed:7631745). It plays a key role in maintaining sodium homeostasis through electrogenic sodium reabsorption in the kidneys (By similarity).</text>
</comment>
<comment type="catalytic activity">
    <reaction evidence="6">
        <text>Na(+)(in) = Na(+)(out)</text>
        <dbReference type="Rhea" id="RHEA:34963"/>
        <dbReference type="ChEBI" id="CHEBI:29101"/>
    </reaction>
</comment>
<comment type="activity regulation">
    <text evidence="6">Originally identified and characterized by its inhibition by the diuretic drug amiloride.</text>
</comment>
<comment type="subunit">
    <text evidence="5 6">Heterotrimer; containing an alpha/SCNN1A, a beta/SCNN1B and a gamma/SCNN1G subunit (PubMed:7631745). Interacts with shroom1 (PubMed:10438504).</text>
</comment>
<comment type="subcellular location">
    <subcellularLocation>
        <location evidence="8">Apical cell membrane</location>
        <topology evidence="2">Multi-pass membrane protein</topology>
    </subcellularLocation>
    <subcellularLocation>
        <location evidence="1">Cell projection</location>
        <location evidence="1">Cilium</location>
    </subcellularLocation>
    <subcellularLocation>
        <location evidence="1">Cytoplasmic granule</location>
    </subcellularLocation>
    <subcellularLocation>
        <location evidence="1">Cytoplasm</location>
    </subcellularLocation>
    <subcellularLocation>
        <location evidence="2">Cytoplasmic vesicle</location>
        <location evidence="2">Secretory vesicle</location>
        <location evidence="2">Acrosome</location>
    </subcellularLocation>
    <subcellularLocation>
        <location evidence="2">Cell projection</location>
        <location evidence="2">Cilium</location>
        <location evidence="2">Flagellum</location>
    </subcellularLocation>
</comment>
<comment type="similarity">
    <text evidence="7">Belongs to the amiloride-sensitive sodium channel (TC 1.A.6) family. SCNN1A subfamily.</text>
</comment>
<sequence>MTKEEKNEKEALIEFFSSYRELFEFFCSNTTIHGAIRLVCSRRNRMKTAFWLVLFLVTFGLMYWQFGLLFGQYFSYPVSINLNVNSDKLPFPAVTVCTLNPYRYKAIQNDLQELDKETQRTLYELYKYNSTGVQGWIPNNQRVKRDRAGLPYLLELLPPGSETHRVSRSVIEEELQVKRREWNIGFKLCNETGGDCFYQTYTSGVDAIREWYRFHYINILARVPQEAAIDGEQLENFIFACRFNEESCTKANYSSFHHAIYGNCYTFNQNQSDQSNLWSSSMPGIKNGLTLVLRTEQHDYIPLLSSVAGARVLVHGHKEPAFMDDNGFNIPPGMETSIGMKKETINRLGGKYSDCSEDGSDVDVKNLFQSEYTEQVCVRSCFQAAMVARCGCGYAFYPLSPGDQYCDYNKHKSWGHCYYKLIIEFTSNKLGCFTKCRKPCLVSEYQLTAGYSKWPNRVSQDWVLHTLSRQYNLTDRNGIAKLNIYFEELNYKTILESPTINMAMLLSLLGSQWSLWFGSSVLSVVEMLELVIDFVIIGVMILLHRYYYKKANEGEETTVVPTPAPAFADLEQQVPHIPRGDLSQRQISVVADITPPPAYESLDLRSVGTLSSRSSSMRSNRSYYEENGGRRN</sequence>
<feature type="chain" id="PRO_0000181266" description="Epithelial sodium channel subunit alpha">
    <location>
        <begin position="1"/>
        <end position="632"/>
    </location>
</feature>
<feature type="topological domain" description="Cytoplasmic" evidence="2">
    <location>
        <begin position="1"/>
        <end position="49"/>
    </location>
</feature>
<feature type="transmembrane region" description="Helical; Name=1" evidence="3">
    <location>
        <begin position="50"/>
        <end position="70"/>
    </location>
</feature>
<feature type="topological domain" description="Extracellular" evidence="2">
    <location>
        <begin position="71"/>
        <end position="520"/>
    </location>
</feature>
<feature type="transmembrane region" description="Helical; Name=2" evidence="3">
    <location>
        <begin position="521"/>
        <end position="541"/>
    </location>
</feature>
<feature type="topological domain" description="Cytoplasmic" evidence="2">
    <location>
        <begin position="542"/>
        <end position="632"/>
    </location>
</feature>
<feature type="region of interest" description="Disordered" evidence="4">
    <location>
        <begin position="612"/>
        <end position="632"/>
    </location>
</feature>
<feature type="compositionally biased region" description="Low complexity" evidence="4">
    <location>
        <begin position="612"/>
        <end position="622"/>
    </location>
</feature>
<feature type="compositionally biased region" description="Basic and acidic residues" evidence="4">
    <location>
        <begin position="623"/>
        <end position="632"/>
    </location>
</feature>
<feature type="disulfide bond" evidence="1">
    <location>
        <begin position="97"/>
        <end position="264"/>
    </location>
</feature>
<feature type="disulfide bond" evidence="1">
    <location>
        <begin position="189"/>
        <end position="196"/>
    </location>
</feature>
<feature type="disulfide bond" evidence="1">
    <location>
        <begin position="241"/>
        <end position="248"/>
    </location>
</feature>
<feature type="disulfide bond" evidence="1">
    <location>
        <begin position="355"/>
        <end position="440"/>
    </location>
</feature>
<feature type="disulfide bond" evidence="1">
    <location>
        <begin position="377"/>
        <end position="436"/>
    </location>
</feature>
<feature type="disulfide bond" evidence="1">
    <location>
        <begin position="377"/>
        <end position="417"/>
    </location>
</feature>
<feature type="disulfide bond" evidence="1">
    <location>
        <begin position="381"/>
        <end position="432"/>
    </location>
</feature>
<feature type="disulfide bond" evidence="1">
    <location>
        <begin position="390"/>
        <end position="440"/>
    </location>
</feature>
<feature type="disulfide bond" evidence="1">
    <location>
        <begin position="390"/>
        <end position="417"/>
    </location>
</feature>
<feature type="disulfide bond" evidence="1">
    <location>
        <begin position="392"/>
        <end position="406"/>
    </location>
</feature>
<gene>
    <name evidence="1" type="primary">scnn1a</name>
</gene>
<proteinExistence type="evidence at protein level"/>
<reference key="1">
    <citation type="journal article" date="1995" name="Am. J. Physiol.">
        <title>The highly selective low-conductance epithelial Na channel of Xenopus laevis A6 kidney cells.</title>
        <authorList>
            <person name="Puoti A."/>
            <person name="May A."/>
            <person name="Canessa C.M."/>
            <person name="Horisberger J.-D."/>
            <person name="Schild L."/>
            <person name="Rossier B.C."/>
        </authorList>
    </citation>
    <scope>NUCLEOTIDE SEQUENCE [MRNA]</scope>
    <scope>FUNCTION</scope>
    <scope>TRANSPORTER ACTIVITY</scope>
    <scope>ACTIVITY REGULATION</scope>
    <scope>SUBUNIT</scope>
    <scope>SUBCELLULAR LOCATION</scope>
</reference>
<reference key="2">
    <citation type="journal article" date="1999" name="J. Biol. Chem.">
        <title>Association of the epithelial sodium channel with Apx and alpha-spectrin in A6 renal epithelial cells.</title>
        <authorList>
            <person name="Zuckerman J.B."/>
            <person name="Chen X."/>
            <person name="Jacobs J.D."/>
            <person name="Hu B."/>
            <person name="Kleyman T.R."/>
            <person name="Smith P.R."/>
        </authorList>
    </citation>
    <scope>INTERACTION WITH SHROOM1</scope>
</reference>
<organism>
    <name type="scientific">Xenopus laevis</name>
    <name type="common">African clawed frog</name>
    <dbReference type="NCBI Taxonomy" id="8355"/>
    <lineage>
        <taxon>Eukaryota</taxon>
        <taxon>Metazoa</taxon>
        <taxon>Chordata</taxon>
        <taxon>Craniata</taxon>
        <taxon>Vertebrata</taxon>
        <taxon>Euteleostomi</taxon>
        <taxon>Amphibia</taxon>
        <taxon>Batrachia</taxon>
        <taxon>Anura</taxon>
        <taxon>Pipoidea</taxon>
        <taxon>Pipidae</taxon>
        <taxon>Xenopodinae</taxon>
        <taxon>Xenopus</taxon>
        <taxon>Xenopus</taxon>
    </lineage>
</organism>
<accession>P51167</accession>